<proteinExistence type="evidence at transcript level"/>
<organism>
    <name type="scientific">Bos taurus</name>
    <name type="common">Bovine</name>
    <dbReference type="NCBI Taxonomy" id="9913"/>
    <lineage>
        <taxon>Eukaryota</taxon>
        <taxon>Metazoa</taxon>
        <taxon>Chordata</taxon>
        <taxon>Craniata</taxon>
        <taxon>Vertebrata</taxon>
        <taxon>Euteleostomi</taxon>
        <taxon>Mammalia</taxon>
        <taxon>Eutheria</taxon>
        <taxon>Laurasiatheria</taxon>
        <taxon>Artiodactyla</taxon>
        <taxon>Ruminantia</taxon>
        <taxon>Pecora</taxon>
        <taxon>Bovidae</taxon>
        <taxon>Bovinae</taxon>
        <taxon>Bos</taxon>
    </lineage>
</organism>
<keyword id="KW-0007">Acetylation</keyword>
<keyword id="KW-0963">Cytoplasm</keyword>
<keyword id="KW-0396">Initiation factor</keyword>
<keyword id="KW-0539">Nucleus</keyword>
<keyword id="KW-0597">Phosphoprotein</keyword>
<keyword id="KW-0648">Protein biosynthesis</keyword>
<keyword id="KW-1185">Reference proteome</keyword>
<protein>
    <recommendedName>
        <fullName evidence="2">Eukaryotic translation initiation factor 3 subunit K</fullName>
        <shortName evidence="2">eIF3k</shortName>
    </recommendedName>
    <alternativeName>
        <fullName evidence="2">Eukaryotic translation initiation factor 3 subunit 12</fullName>
    </alternativeName>
    <alternativeName>
        <fullName evidence="2">eIF-3 p25</fullName>
    </alternativeName>
</protein>
<name>EIF3K_BOVIN</name>
<sequence>MAMFEQMRANVGKLLKGIDRYNPENLATLERYVETQAKENAYDLEANLAVLKLYQFNPAFFQTTVTAQILLKALTNLPHTDFTLCKCMIDQAHQEERPIRQILYLGDLLETCHFQAFWQALDENMDLLEGITGFEDSVRKFICHVVGITYQHIDRWLLAEMLGDLTDSQLKVWMSKYGWSADESGQIFICSQEESIKPKNIVEKIDFDSVSSIMASSQ</sequence>
<feature type="initiator methionine" description="Removed" evidence="2">
    <location>
        <position position="1"/>
    </location>
</feature>
<feature type="chain" id="PRO_0000123545" description="Eukaryotic translation initiation factor 3 subunit K">
    <location>
        <begin position="2"/>
        <end position="218"/>
    </location>
</feature>
<feature type="domain" description="PCI" evidence="3">
    <location>
        <begin position="42"/>
        <end position="204"/>
    </location>
</feature>
<feature type="modified residue" description="N-acetylalanine" evidence="1 2">
    <location>
        <position position="2"/>
    </location>
</feature>
<feature type="modified residue" description="Phosphothreonine" evidence="1">
    <location>
        <position position="28"/>
    </location>
</feature>
<feature type="modified residue" description="Phosphoserine" evidence="1">
    <location>
        <position position="217"/>
    </location>
</feature>
<comment type="function">
    <text evidence="2">Component of the eukaryotic translation initiation factor 3 (eIF-3) complex, which is required for several steps in the initiation of protein synthesis. The eIF-3 complex associates with the 40S ribosome and facilitates the recruitment of eIF-1, eIF-1A, eIF-2:GTP:methionyl-tRNAi and eIF-5 to form the 43S pre-initiation complex (43S PIC). The eIF-3 complex stimulates mRNA recruitment to the 43S PIC and scanning of the mRNA for AUG recognition. The eIF-3 complex is also required for disassembly and recycling of post-termination ribosomal complexes and subsequently prevents premature joining of the 40S and 60S ribosomal subunits prior to initiation. The eIF-3 complex specifically targets and initiates translation of a subset of mRNAs involved in cell proliferation, including cell cycling, differentiation and apoptosis, and uses different modes of RNA stem-loop binding to exert either translational activation or repression.</text>
</comment>
<comment type="subunit">
    <text evidence="2">Component of the eukaryotic translation initiation factor 3 (eIF-3) complex, which is composed of 13 subunits: EIF3A, EIF3B, EIF3C, EIF3D, EIF3E, EIF3F, EIF3G, EIF3H, EIF3I, EIF3J, EIF3K, EIF3L and EIF3M. The eIF-3 complex appears to include 3 stable modules: module A is composed of EIF3A, EIF3B, EIF3G and EIF3I; module B is composed of EIF3F, EIF3H, and EIF3M; and module C is composed of EIF3C, EIF3D, EIF3E, EIF3K and EIF3L. EIF3C of module C binds EIF3B of module A and EIF3H of module B, thereby linking the three modules. EIF3J is a labile subunit that binds to the eIF-3 complex via EIF3B. The eIF-3 complex interacts with RPS6KB1 under conditions of nutrient depletion. Mitogenic stimulation leads to binding and activation of a complex composed of MTOR and RPTOR, leading to phosphorylation and release of RPS6KB1 and binding of EIF4B to eIF-3. Interacts with CCND3, but not with CCND1 and CCND2.</text>
</comment>
<comment type="subcellular location">
    <subcellularLocation>
        <location evidence="2">Nucleus</location>
    </subcellularLocation>
    <subcellularLocation>
        <location evidence="2">Cytoplasm</location>
    </subcellularLocation>
</comment>
<comment type="similarity">
    <text evidence="2">Belongs to the eIF-3 subunit K family.</text>
</comment>
<evidence type="ECO:0000250" key="1">
    <source>
        <dbReference type="UniProtKB" id="Q9UBQ5"/>
    </source>
</evidence>
<evidence type="ECO:0000255" key="2">
    <source>
        <dbReference type="HAMAP-Rule" id="MF_03010"/>
    </source>
</evidence>
<evidence type="ECO:0000255" key="3">
    <source>
        <dbReference type="PROSITE-ProRule" id="PRU01185"/>
    </source>
</evidence>
<reference key="1">
    <citation type="submission" date="2005-08" db="EMBL/GenBank/DDBJ databases">
        <authorList>
            <consortium name="NIH - Mammalian Gene Collection (MGC) project"/>
        </authorList>
    </citation>
    <scope>NUCLEOTIDE SEQUENCE [LARGE SCALE MRNA]</scope>
    <source>
        <strain>Crossbred X Angus</strain>
        <tissue>Ileum</tissue>
    </source>
</reference>
<dbReference type="EMBL" id="BC102250">
    <property type="protein sequence ID" value="AAI02251.1"/>
    <property type="molecule type" value="mRNA"/>
</dbReference>
<dbReference type="RefSeq" id="NP_001029661.1">
    <property type="nucleotide sequence ID" value="NM_001034489.2"/>
</dbReference>
<dbReference type="SMR" id="Q3T0V3"/>
<dbReference type="FunCoup" id="Q3T0V3">
    <property type="interactions" value="3127"/>
</dbReference>
<dbReference type="STRING" id="9913.ENSBTAP00000014888"/>
<dbReference type="PaxDb" id="9913-ENSBTAP00000014888"/>
<dbReference type="Ensembl" id="ENSBTAT00000014888.4">
    <property type="protein sequence ID" value="ENSBTAP00000014888.3"/>
    <property type="gene ID" value="ENSBTAG00000011212.5"/>
</dbReference>
<dbReference type="GeneID" id="515326"/>
<dbReference type="KEGG" id="bta:515326"/>
<dbReference type="CTD" id="27335"/>
<dbReference type="VEuPathDB" id="HostDB:ENSBTAG00000011212"/>
<dbReference type="VGNC" id="VGNC:28401">
    <property type="gene designation" value="EIF3K"/>
</dbReference>
<dbReference type="eggNOG" id="KOG3252">
    <property type="taxonomic scope" value="Eukaryota"/>
</dbReference>
<dbReference type="GeneTree" id="ENSGT00390000009409"/>
<dbReference type="HOGENOM" id="CLU_076723_1_0_1"/>
<dbReference type="InParanoid" id="Q3T0V3"/>
<dbReference type="OMA" id="GDDLCAD"/>
<dbReference type="OrthoDB" id="337745at2759"/>
<dbReference type="TreeFam" id="TF314893"/>
<dbReference type="Reactome" id="R-BTA-156827">
    <property type="pathway name" value="L13a-mediated translational silencing of Ceruloplasmin expression"/>
</dbReference>
<dbReference type="Reactome" id="R-BTA-72649">
    <property type="pathway name" value="Translation initiation complex formation"/>
</dbReference>
<dbReference type="Reactome" id="R-BTA-72689">
    <property type="pathway name" value="Formation of a pool of free 40S subunits"/>
</dbReference>
<dbReference type="Reactome" id="R-BTA-72695">
    <property type="pathway name" value="Formation of the ternary complex, and subsequently, the 43S complex"/>
</dbReference>
<dbReference type="Reactome" id="R-BTA-72702">
    <property type="pathway name" value="Ribosomal scanning and start codon recognition"/>
</dbReference>
<dbReference type="Proteomes" id="UP000009136">
    <property type="component" value="Chromosome 18"/>
</dbReference>
<dbReference type="Bgee" id="ENSBTAG00000011212">
    <property type="expression patterns" value="Expressed in digestive system secreted substance and 105 other cell types or tissues"/>
</dbReference>
<dbReference type="GO" id="GO:0005829">
    <property type="term" value="C:cytosol"/>
    <property type="evidence" value="ECO:0007669"/>
    <property type="project" value="Ensembl"/>
</dbReference>
<dbReference type="GO" id="GO:0016282">
    <property type="term" value="C:eukaryotic 43S preinitiation complex"/>
    <property type="evidence" value="ECO:0007669"/>
    <property type="project" value="UniProtKB-UniRule"/>
</dbReference>
<dbReference type="GO" id="GO:0033290">
    <property type="term" value="C:eukaryotic 48S preinitiation complex"/>
    <property type="evidence" value="ECO:0007669"/>
    <property type="project" value="UniProtKB-UniRule"/>
</dbReference>
<dbReference type="GO" id="GO:0005852">
    <property type="term" value="C:eukaryotic translation initiation factor 3 complex"/>
    <property type="evidence" value="ECO:0000250"/>
    <property type="project" value="UniProtKB"/>
</dbReference>
<dbReference type="GO" id="GO:0005634">
    <property type="term" value="C:nucleus"/>
    <property type="evidence" value="ECO:0007669"/>
    <property type="project" value="UniProtKB-SubCell"/>
</dbReference>
<dbReference type="GO" id="GO:0043022">
    <property type="term" value="F:ribosome binding"/>
    <property type="evidence" value="ECO:0007669"/>
    <property type="project" value="InterPro"/>
</dbReference>
<dbReference type="GO" id="GO:0003723">
    <property type="term" value="F:RNA binding"/>
    <property type="evidence" value="ECO:0007669"/>
    <property type="project" value="UniProtKB-UniRule"/>
</dbReference>
<dbReference type="GO" id="GO:0003743">
    <property type="term" value="F:translation initiation factor activity"/>
    <property type="evidence" value="ECO:0007669"/>
    <property type="project" value="UniProtKB-UniRule"/>
</dbReference>
<dbReference type="GO" id="GO:0001732">
    <property type="term" value="P:formation of cytoplasmic translation initiation complex"/>
    <property type="evidence" value="ECO:0007669"/>
    <property type="project" value="UniProtKB-UniRule"/>
</dbReference>
<dbReference type="GO" id="GO:0006446">
    <property type="term" value="P:regulation of translational initiation"/>
    <property type="evidence" value="ECO:0007669"/>
    <property type="project" value="InterPro"/>
</dbReference>
<dbReference type="GO" id="GO:0006413">
    <property type="term" value="P:translational initiation"/>
    <property type="evidence" value="ECO:0000250"/>
    <property type="project" value="UniProtKB"/>
</dbReference>
<dbReference type="FunFam" id="1.10.10.10:FF:000212">
    <property type="entry name" value="Eukaryotic translation initiation factor 3 subunit K"/>
    <property type="match status" value="1"/>
</dbReference>
<dbReference type="FunFam" id="1.25.40.250:FF:000001">
    <property type="entry name" value="Eukaryotic translation initiation factor 3 subunit K"/>
    <property type="match status" value="1"/>
</dbReference>
<dbReference type="Gene3D" id="1.25.40.250">
    <property type="entry name" value="ARM repeat, domain 1"/>
    <property type="match status" value="1"/>
</dbReference>
<dbReference type="Gene3D" id="1.10.10.10">
    <property type="entry name" value="Winged helix-like DNA-binding domain superfamily/Winged helix DNA-binding domain"/>
    <property type="match status" value="1"/>
</dbReference>
<dbReference type="HAMAP" id="MF_03010">
    <property type="entry name" value="eIF3k"/>
    <property type="match status" value="1"/>
</dbReference>
<dbReference type="InterPro" id="IPR016024">
    <property type="entry name" value="ARM-type_fold"/>
</dbReference>
<dbReference type="InterPro" id="IPR033464">
    <property type="entry name" value="CSN8_PSD8_EIF3K"/>
</dbReference>
<dbReference type="InterPro" id="IPR009374">
    <property type="entry name" value="eIF3k"/>
</dbReference>
<dbReference type="InterPro" id="IPR000717">
    <property type="entry name" value="PCI_dom"/>
</dbReference>
<dbReference type="InterPro" id="IPR016020">
    <property type="entry name" value="Transl_init_fac_sub12_N_euk"/>
</dbReference>
<dbReference type="InterPro" id="IPR036388">
    <property type="entry name" value="WH-like_DNA-bd_sf"/>
</dbReference>
<dbReference type="InterPro" id="IPR036390">
    <property type="entry name" value="WH_DNA-bd_sf"/>
</dbReference>
<dbReference type="PANTHER" id="PTHR13022">
    <property type="entry name" value="EUKARYOTIC TRANSLATION INITIATION FACTOR 3 SUBUNIT 11"/>
    <property type="match status" value="1"/>
</dbReference>
<dbReference type="PANTHER" id="PTHR13022:SF0">
    <property type="entry name" value="EUKARYOTIC TRANSLATION INITIATION FACTOR 3 SUBUNIT K"/>
    <property type="match status" value="1"/>
</dbReference>
<dbReference type="Pfam" id="PF10075">
    <property type="entry name" value="CSN8_PSD8_EIF3K"/>
    <property type="match status" value="1"/>
</dbReference>
<dbReference type="SUPFAM" id="SSF48371">
    <property type="entry name" value="ARM repeat"/>
    <property type="match status" value="1"/>
</dbReference>
<dbReference type="SUPFAM" id="SSF46785">
    <property type="entry name" value="Winged helix' DNA-binding domain"/>
    <property type="match status" value="1"/>
</dbReference>
<dbReference type="PROSITE" id="PS50250">
    <property type="entry name" value="PCI"/>
    <property type="match status" value="1"/>
</dbReference>
<gene>
    <name evidence="2" type="primary">EIF3K</name>
    <name evidence="2" type="synonym">EIF3S12</name>
</gene>
<accession>Q3T0V3</accession>